<sequence>MPAENAHIRNFCIIAHIDHGKSTLADRLLDKTGTLTKREAQAQFLDNMAIERERGITIKAQSVRMNYTAKDGKQYVLNLIDTPGHVDFAYEVSRSLAACEGALLVVDATQGVEAQTLSNVYMALDHNLEIIPVINKIDLPSADVDRTRAEIEDVIGIDASVAVPCSAKEGIGIQDILESVVQNVPPPSGSADAPLKALIFDSWYDNYRGVVTLVRVLEGTLKLKQKIKLFSNNKVFEVQELGVFSPFSRPVPQLIAGEVGVLVANVKELQDAKVGDTVTEESRPTAEPFPGFQEVKPMVFSGIFPVDSADYENLRDALAKLVLNDSAFTYEPESSTALGFGFRCGYLGLLHMEIVQERLEREYNLNLITTAPSVVYRITTSKGETLLVDNPAKLPPVQHIEKFEEPILTCHIHVPNDHLGAILKLCQERRGVQKDMKYLGSSGQRVQVTYEMPLAEVVFDFFDKLKSVSRGYASLDYELAGYIESDLARLDILINGDPVDALSVIVHRERAYLRGREVCQKLKEVIPKQMYEVAIQAAIGAKIISRETISAIRKNVLAKCYGGDISRKRKLLEKQKEGKKRMKQVGTVEIPQEAFLAVLKSEQ</sequence>
<organism>
    <name type="scientific">Myxococcus xanthus (strain DK1622)</name>
    <dbReference type="NCBI Taxonomy" id="246197"/>
    <lineage>
        <taxon>Bacteria</taxon>
        <taxon>Pseudomonadati</taxon>
        <taxon>Myxococcota</taxon>
        <taxon>Myxococcia</taxon>
        <taxon>Myxococcales</taxon>
        <taxon>Cystobacterineae</taxon>
        <taxon>Myxococcaceae</taxon>
        <taxon>Myxococcus</taxon>
    </lineage>
</organism>
<accession>Q1D6M1</accession>
<name>LEPA_MYXXD</name>
<comment type="function">
    <text evidence="1">Required for accurate and efficient protein synthesis under certain stress conditions. May act as a fidelity factor of the translation reaction, by catalyzing a one-codon backward translocation of tRNAs on improperly translocated ribosomes. Back-translocation proceeds from a post-translocation (POST) complex to a pre-translocation (PRE) complex, thus giving elongation factor G a second chance to translocate the tRNAs correctly. Binds to ribosomes in a GTP-dependent manner.</text>
</comment>
<comment type="catalytic activity">
    <reaction evidence="1">
        <text>GTP + H2O = GDP + phosphate + H(+)</text>
        <dbReference type="Rhea" id="RHEA:19669"/>
        <dbReference type="ChEBI" id="CHEBI:15377"/>
        <dbReference type="ChEBI" id="CHEBI:15378"/>
        <dbReference type="ChEBI" id="CHEBI:37565"/>
        <dbReference type="ChEBI" id="CHEBI:43474"/>
        <dbReference type="ChEBI" id="CHEBI:58189"/>
        <dbReference type="EC" id="3.6.5.n1"/>
    </reaction>
</comment>
<comment type="subcellular location">
    <subcellularLocation>
        <location evidence="1">Cell inner membrane</location>
        <topology evidence="1">Peripheral membrane protein</topology>
        <orientation evidence="1">Cytoplasmic side</orientation>
    </subcellularLocation>
</comment>
<comment type="similarity">
    <text evidence="1">Belongs to the TRAFAC class translation factor GTPase superfamily. Classic translation factor GTPase family. LepA subfamily.</text>
</comment>
<feature type="chain" id="PRO_0000265678" description="Elongation factor 4">
    <location>
        <begin position="1"/>
        <end position="603"/>
    </location>
</feature>
<feature type="domain" description="tr-type G">
    <location>
        <begin position="6"/>
        <end position="188"/>
    </location>
</feature>
<feature type="binding site" evidence="1">
    <location>
        <begin position="18"/>
        <end position="23"/>
    </location>
    <ligand>
        <name>GTP</name>
        <dbReference type="ChEBI" id="CHEBI:37565"/>
    </ligand>
</feature>
<feature type="binding site" evidence="1">
    <location>
        <begin position="135"/>
        <end position="138"/>
    </location>
    <ligand>
        <name>GTP</name>
        <dbReference type="ChEBI" id="CHEBI:37565"/>
    </ligand>
</feature>
<proteinExistence type="inferred from homology"/>
<protein>
    <recommendedName>
        <fullName evidence="1">Elongation factor 4</fullName>
        <shortName evidence="1">EF-4</shortName>
        <ecNumber evidence="1">3.6.5.n1</ecNumber>
    </recommendedName>
    <alternativeName>
        <fullName evidence="1">Ribosomal back-translocase LepA</fullName>
    </alternativeName>
</protein>
<gene>
    <name evidence="1" type="primary">lepA</name>
    <name type="ordered locus">MXAN_3508</name>
</gene>
<evidence type="ECO:0000255" key="1">
    <source>
        <dbReference type="HAMAP-Rule" id="MF_00071"/>
    </source>
</evidence>
<keyword id="KW-0997">Cell inner membrane</keyword>
<keyword id="KW-1003">Cell membrane</keyword>
<keyword id="KW-0342">GTP-binding</keyword>
<keyword id="KW-0378">Hydrolase</keyword>
<keyword id="KW-0472">Membrane</keyword>
<keyword id="KW-0547">Nucleotide-binding</keyword>
<keyword id="KW-0648">Protein biosynthesis</keyword>
<keyword id="KW-1185">Reference proteome</keyword>
<reference key="1">
    <citation type="journal article" date="2006" name="Proc. Natl. Acad. Sci. U.S.A.">
        <title>Evolution of sensory complexity recorded in a myxobacterial genome.</title>
        <authorList>
            <person name="Goldman B.S."/>
            <person name="Nierman W.C."/>
            <person name="Kaiser D."/>
            <person name="Slater S.C."/>
            <person name="Durkin A.S."/>
            <person name="Eisen J.A."/>
            <person name="Ronning C.M."/>
            <person name="Barbazuk W.B."/>
            <person name="Blanchard M."/>
            <person name="Field C."/>
            <person name="Halling C."/>
            <person name="Hinkle G."/>
            <person name="Iartchuk O."/>
            <person name="Kim H.S."/>
            <person name="Mackenzie C."/>
            <person name="Madupu R."/>
            <person name="Miller N."/>
            <person name="Shvartsbeyn A."/>
            <person name="Sullivan S.A."/>
            <person name="Vaudin M."/>
            <person name="Wiegand R."/>
            <person name="Kaplan H.B."/>
        </authorList>
    </citation>
    <scope>NUCLEOTIDE SEQUENCE [LARGE SCALE GENOMIC DNA]</scope>
    <source>
        <strain>DK1622</strain>
    </source>
</reference>
<dbReference type="EC" id="3.6.5.n1" evidence="1"/>
<dbReference type="EMBL" id="CP000113">
    <property type="protein sequence ID" value="ABF90468.1"/>
    <property type="molecule type" value="Genomic_DNA"/>
</dbReference>
<dbReference type="RefSeq" id="WP_011553538.1">
    <property type="nucleotide sequence ID" value="NC_008095.1"/>
</dbReference>
<dbReference type="SMR" id="Q1D6M1"/>
<dbReference type="STRING" id="246197.MXAN_3508"/>
<dbReference type="EnsemblBacteria" id="ABF90468">
    <property type="protein sequence ID" value="ABF90468"/>
    <property type="gene ID" value="MXAN_3508"/>
</dbReference>
<dbReference type="GeneID" id="41360853"/>
<dbReference type="KEGG" id="mxa:MXAN_3508"/>
<dbReference type="eggNOG" id="COG0481">
    <property type="taxonomic scope" value="Bacteria"/>
</dbReference>
<dbReference type="HOGENOM" id="CLU_009995_3_3_7"/>
<dbReference type="OrthoDB" id="9760518at2"/>
<dbReference type="Proteomes" id="UP000002402">
    <property type="component" value="Chromosome"/>
</dbReference>
<dbReference type="GO" id="GO:0005886">
    <property type="term" value="C:plasma membrane"/>
    <property type="evidence" value="ECO:0007669"/>
    <property type="project" value="UniProtKB-SubCell"/>
</dbReference>
<dbReference type="GO" id="GO:0005525">
    <property type="term" value="F:GTP binding"/>
    <property type="evidence" value="ECO:0007669"/>
    <property type="project" value="UniProtKB-UniRule"/>
</dbReference>
<dbReference type="GO" id="GO:0003924">
    <property type="term" value="F:GTPase activity"/>
    <property type="evidence" value="ECO:0007669"/>
    <property type="project" value="UniProtKB-UniRule"/>
</dbReference>
<dbReference type="GO" id="GO:0043022">
    <property type="term" value="F:ribosome binding"/>
    <property type="evidence" value="ECO:0007669"/>
    <property type="project" value="UniProtKB-UniRule"/>
</dbReference>
<dbReference type="GO" id="GO:0003746">
    <property type="term" value="F:translation elongation factor activity"/>
    <property type="evidence" value="ECO:0007669"/>
    <property type="project" value="UniProtKB-UniRule"/>
</dbReference>
<dbReference type="GO" id="GO:0045727">
    <property type="term" value="P:positive regulation of translation"/>
    <property type="evidence" value="ECO:0007669"/>
    <property type="project" value="UniProtKB-UniRule"/>
</dbReference>
<dbReference type="CDD" id="cd03699">
    <property type="entry name" value="EF4_II"/>
    <property type="match status" value="1"/>
</dbReference>
<dbReference type="CDD" id="cd16260">
    <property type="entry name" value="EF4_III"/>
    <property type="match status" value="1"/>
</dbReference>
<dbReference type="CDD" id="cd01890">
    <property type="entry name" value="LepA"/>
    <property type="match status" value="1"/>
</dbReference>
<dbReference type="CDD" id="cd03709">
    <property type="entry name" value="lepA_C"/>
    <property type="match status" value="1"/>
</dbReference>
<dbReference type="FunFam" id="3.40.50.300:FF:000078">
    <property type="entry name" value="Elongation factor 4"/>
    <property type="match status" value="1"/>
</dbReference>
<dbReference type="FunFam" id="2.40.30.10:FF:000015">
    <property type="entry name" value="Translation factor GUF1, mitochondrial"/>
    <property type="match status" value="1"/>
</dbReference>
<dbReference type="FunFam" id="3.30.70.240:FF:000007">
    <property type="entry name" value="Translation factor GUF1, mitochondrial"/>
    <property type="match status" value="1"/>
</dbReference>
<dbReference type="FunFam" id="3.30.70.2570:FF:000001">
    <property type="entry name" value="Translation factor GUF1, mitochondrial"/>
    <property type="match status" value="1"/>
</dbReference>
<dbReference type="FunFam" id="3.30.70.870:FF:000004">
    <property type="entry name" value="Translation factor GUF1, mitochondrial"/>
    <property type="match status" value="1"/>
</dbReference>
<dbReference type="Gene3D" id="3.30.70.240">
    <property type="match status" value="1"/>
</dbReference>
<dbReference type="Gene3D" id="3.30.70.2570">
    <property type="entry name" value="Elongation factor 4, C-terminal domain"/>
    <property type="match status" value="1"/>
</dbReference>
<dbReference type="Gene3D" id="3.30.70.870">
    <property type="entry name" value="Elongation Factor G (Translational Gtpase), domain 3"/>
    <property type="match status" value="1"/>
</dbReference>
<dbReference type="Gene3D" id="3.40.50.300">
    <property type="entry name" value="P-loop containing nucleotide triphosphate hydrolases"/>
    <property type="match status" value="1"/>
</dbReference>
<dbReference type="Gene3D" id="2.40.30.10">
    <property type="entry name" value="Translation factors"/>
    <property type="match status" value="1"/>
</dbReference>
<dbReference type="HAMAP" id="MF_00071">
    <property type="entry name" value="LepA"/>
    <property type="match status" value="1"/>
</dbReference>
<dbReference type="InterPro" id="IPR006297">
    <property type="entry name" value="EF-4"/>
</dbReference>
<dbReference type="InterPro" id="IPR035647">
    <property type="entry name" value="EFG_III/V"/>
</dbReference>
<dbReference type="InterPro" id="IPR000640">
    <property type="entry name" value="EFG_V-like"/>
</dbReference>
<dbReference type="InterPro" id="IPR004161">
    <property type="entry name" value="EFTu-like_2"/>
</dbReference>
<dbReference type="InterPro" id="IPR031157">
    <property type="entry name" value="G_TR_CS"/>
</dbReference>
<dbReference type="InterPro" id="IPR038363">
    <property type="entry name" value="LepA_C_sf"/>
</dbReference>
<dbReference type="InterPro" id="IPR013842">
    <property type="entry name" value="LepA_CTD"/>
</dbReference>
<dbReference type="InterPro" id="IPR035654">
    <property type="entry name" value="LepA_IV"/>
</dbReference>
<dbReference type="InterPro" id="IPR027417">
    <property type="entry name" value="P-loop_NTPase"/>
</dbReference>
<dbReference type="InterPro" id="IPR005225">
    <property type="entry name" value="Small_GTP-bd"/>
</dbReference>
<dbReference type="InterPro" id="IPR000795">
    <property type="entry name" value="T_Tr_GTP-bd_dom"/>
</dbReference>
<dbReference type="InterPro" id="IPR009000">
    <property type="entry name" value="Transl_B-barrel_sf"/>
</dbReference>
<dbReference type="NCBIfam" id="TIGR01393">
    <property type="entry name" value="lepA"/>
    <property type="match status" value="1"/>
</dbReference>
<dbReference type="NCBIfam" id="TIGR00231">
    <property type="entry name" value="small_GTP"/>
    <property type="match status" value="1"/>
</dbReference>
<dbReference type="PANTHER" id="PTHR43512:SF4">
    <property type="entry name" value="TRANSLATION FACTOR GUF1 HOMOLOG, CHLOROPLASTIC"/>
    <property type="match status" value="1"/>
</dbReference>
<dbReference type="PANTHER" id="PTHR43512">
    <property type="entry name" value="TRANSLATION FACTOR GUF1-RELATED"/>
    <property type="match status" value="1"/>
</dbReference>
<dbReference type="Pfam" id="PF00679">
    <property type="entry name" value="EFG_C"/>
    <property type="match status" value="1"/>
</dbReference>
<dbReference type="Pfam" id="PF00009">
    <property type="entry name" value="GTP_EFTU"/>
    <property type="match status" value="1"/>
</dbReference>
<dbReference type="Pfam" id="PF03144">
    <property type="entry name" value="GTP_EFTU_D2"/>
    <property type="match status" value="1"/>
</dbReference>
<dbReference type="Pfam" id="PF06421">
    <property type="entry name" value="LepA_C"/>
    <property type="match status" value="1"/>
</dbReference>
<dbReference type="PRINTS" id="PR00315">
    <property type="entry name" value="ELONGATNFCT"/>
</dbReference>
<dbReference type="SMART" id="SM00838">
    <property type="entry name" value="EFG_C"/>
    <property type="match status" value="1"/>
</dbReference>
<dbReference type="SUPFAM" id="SSF54980">
    <property type="entry name" value="EF-G C-terminal domain-like"/>
    <property type="match status" value="2"/>
</dbReference>
<dbReference type="SUPFAM" id="SSF52540">
    <property type="entry name" value="P-loop containing nucleoside triphosphate hydrolases"/>
    <property type="match status" value="1"/>
</dbReference>
<dbReference type="SUPFAM" id="SSF50447">
    <property type="entry name" value="Translation proteins"/>
    <property type="match status" value="1"/>
</dbReference>
<dbReference type="PROSITE" id="PS00301">
    <property type="entry name" value="G_TR_1"/>
    <property type="match status" value="1"/>
</dbReference>
<dbReference type="PROSITE" id="PS51722">
    <property type="entry name" value="G_TR_2"/>
    <property type="match status" value="1"/>
</dbReference>